<protein>
    <recommendedName>
        <fullName evidence="1">Galactose/methyl galactoside import permease protein MglC</fullName>
    </recommendedName>
</protein>
<evidence type="ECO:0000250" key="1">
    <source>
        <dbReference type="UniProtKB" id="P23200"/>
    </source>
</evidence>
<evidence type="ECO:0000255" key="2"/>
<evidence type="ECO:0000305" key="3"/>
<sequence length="336" mass="35727">MSALEKNKSFDLLKQNAIYFVLLILLGIIIAQDPTFLNLVNFSNILTQSSVRLIIALGVAGLLITQGTDLSAGRQVGLAAVISATMLQSMENINRVFPEMGQIPIPVVILAVCAIGAVIGLVNGLVIAYLNVTPFIATMGTMIIIYGFNSLYYDAVGGSPIAGFSENFSTFAQGFFRVGSFKLSYITIYAAIAALLVWIMWNKTRFGKNVFAIGGNPEAAKVSGVNVARNLVAIYMIAGMFYAFGGMLEAGRIGSATNNLGFMYELDAIAACVVGGVSFAGGVGTVIGVITGVIIFTVINYGLTYIGVNPYWQYIIKGSIIILAVAIDSLKYAKKK</sequence>
<organism>
    <name type="scientific">Haemophilus influenzae (strain ATCC 51907 / DSM 11121 / KW20 / Rd)</name>
    <dbReference type="NCBI Taxonomy" id="71421"/>
    <lineage>
        <taxon>Bacteria</taxon>
        <taxon>Pseudomonadati</taxon>
        <taxon>Pseudomonadota</taxon>
        <taxon>Gammaproteobacteria</taxon>
        <taxon>Pasteurellales</taxon>
        <taxon>Pasteurellaceae</taxon>
        <taxon>Haemophilus</taxon>
    </lineage>
</organism>
<comment type="function">
    <text evidence="1">Part of the ABC transporter complex MglABC involved in galactose/methyl galactoside import. Probably responsible for the translocation of the substrate across the membrane.</text>
</comment>
<comment type="subunit">
    <text evidence="1">The complex is composed of one ATP-binding protein (MglA), two transmembrane proteins (MglC) and a solute-binding protein (MglB).</text>
</comment>
<comment type="subcellular location">
    <subcellularLocation>
        <location evidence="1">Cell inner membrane</location>
        <topology evidence="2">Multi-pass membrane protein</topology>
    </subcellularLocation>
</comment>
<comment type="similarity">
    <text evidence="3">Belongs to the binding-protein-dependent transport system permease family. AraH/RbsC subfamily.</text>
</comment>
<dbReference type="EMBL" id="L42023">
    <property type="protein sequence ID" value="AAC22483.1"/>
    <property type="molecule type" value="Genomic_DNA"/>
</dbReference>
<dbReference type="PIR" id="I64096">
    <property type="entry name" value="I64096"/>
</dbReference>
<dbReference type="RefSeq" id="NP_438984.1">
    <property type="nucleotide sequence ID" value="NC_000907.1"/>
</dbReference>
<dbReference type="STRING" id="71421.HI_0824"/>
<dbReference type="EnsemblBacteria" id="AAC22483">
    <property type="protein sequence ID" value="AAC22483"/>
    <property type="gene ID" value="HI_0824"/>
</dbReference>
<dbReference type="KEGG" id="hin:HI_0824"/>
<dbReference type="PATRIC" id="fig|71421.8.peg.865"/>
<dbReference type="eggNOG" id="COG4211">
    <property type="taxonomic scope" value="Bacteria"/>
</dbReference>
<dbReference type="HOGENOM" id="CLU_028880_1_0_6"/>
<dbReference type="OrthoDB" id="8843934at2"/>
<dbReference type="PhylomeDB" id="P44885"/>
<dbReference type="BioCyc" id="HINF71421:G1GJ1-865-MONOMER"/>
<dbReference type="Proteomes" id="UP000000579">
    <property type="component" value="Chromosome"/>
</dbReference>
<dbReference type="GO" id="GO:0005886">
    <property type="term" value="C:plasma membrane"/>
    <property type="evidence" value="ECO:0000318"/>
    <property type="project" value="GO_Central"/>
</dbReference>
<dbReference type="GO" id="GO:0022857">
    <property type="term" value="F:transmembrane transporter activity"/>
    <property type="evidence" value="ECO:0007669"/>
    <property type="project" value="InterPro"/>
</dbReference>
<dbReference type="CDD" id="cd06579">
    <property type="entry name" value="TM_PBP1_transp_AraH_like"/>
    <property type="match status" value="1"/>
</dbReference>
<dbReference type="InterPro" id="IPR001851">
    <property type="entry name" value="ABC_transp_permease"/>
</dbReference>
<dbReference type="NCBIfam" id="NF007014">
    <property type="entry name" value="PRK09478.1"/>
    <property type="match status" value="1"/>
</dbReference>
<dbReference type="PANTHER" id="PTHR32196">
    <property type="entry name" value="ABC TRANSPORTER PERMEASE PROTEIN YPHD-RELATED-RELATED"/>
    <property type="match status" value="1"/>
</dbReference>
<dbReference type="PANTHER" id="PTHR32196:SF18">
    <property type="entry name" value="GALACTOSE_METHYL GALACTOSIDE IMPORT PERMEASE PROTEIN MGLC"/>
    <property type="match status" value="1"/>
</dbReference>
<dbReference type="Pfam" id="PF02653">
    <property type="entry name" value="BPD_transp_2"/>
    <property type="match status" value="1"/>
</dbReference>
<gene>
    <name type="primary">mglC</name>
    <name type="ordered locus">HI_0824</name>
</gene>
<keyword id="KW-0997">Cell inner membrane</keyword>
<keyword id="KW-1003">Cell membrane</keyword>
<keyword id="KW-0472">Membrane</keyword>
<keyword id="KW-1185">Reference proteome</keyword>
<keyword id="KW-0762">Sugar transport</keyword>
<keyword id="KW-0812">Transmembrane</keyword>
<keyword id="KW-1133">Transmembrane helix</keyword>
<keyword id="KW-0813">Transport</keyword>
<accession>P44885</accession>
<reference key="1">
    <citation type="journal article" date="1995" name="Science">
        <title>Whole-genome random sequencing and assembly of Haemophilus influenzae Rd.</title>
        <authorList>
            <person name="Fleischmann R.D."/>
            <person name="Adams M.D."/>
            <person name="White O."/>
            <person name="Clayton R.A."/>
            <person name="Kirkness E.F."/>
            <person name="Kerlavage A.R."/>
            <person name="Bult C.J."/>
            <person name="Tomb J.-F."/>
            <person name="Dougherty B.A."/>
            <person name="Merrick J.M."/>
            <person name="McKenney K."/>
            <person name="Sutton G.G."/>
            <person name="FitzHugh W."/>
            <person name="Fields C.A."/>
            <person name="Gocayne J.D."/>
            <person name="Scott J.D."/>
            <person name="Shirley R."/>
            <person name="Liu L.-I."/>
            <person name="Glodek A."/>
            <person name="Kelley J.M."/>
            <person name="Weidman J.F."/>
            <person name="Phillips C.A."/>
            <person name="Spriggs T."/>
            <person name="Hedblom E."/>
            <person name="Cotton M.D."/>
            <person name="Utterback T.R."/>
            <person name="Hanna M.C."/>
            <person name="Nguyen D.T."/>
            <person name="Saudek D.M."/>
            <person name="Brandon R.C."/>
            <person name="Fine L.D."/>
            <person name="Fritchman J.L."/>
            <person name="Fuhrmann J.L."/>
            <person name="Geoghagen N.S.M."/>
            <person name="Gnehm C.L."/>
            <person name="McDonald L.A."/>
            <person name="Small K.V."/>
            <person name="Fraser C.M."/>
            <person name="Smith H.O."/>
            <person name="Venter J.C."/>
        </authorList>
    </citation>
    <scope>NUCLEOTIDE SEQUENCE [LARGE SCALE GENOMIC DNA]</scope>
    <source>
        <strain>ATCC 51907 / DSM 11121 / KW20 / Rd</strain>
    </source>
</reference>
<proteinExistence type="inferred from homology"/>
<feature type="chain" id="PRO_0000060108" description="Galactose/methyl galactoside import permease protein MglC">
    <location>
        <begin position="1"/>
        <end position="336"/>
    </location>
</feature>
<feature type="transmembrane region" description="Helical" evidence="2">
    <location>
        <begin position="17"/>
        <end position="37"/>
    </location>
</feature>
<feature type="transmembrane region" description="Helical" evidence="2">
    <location>
        <begin position="53"/>
        <end position="73"/>
    </location>
</feature>
<feature type="transmembrane region" description="Helical" evidence="2">
    <location>
        <begin position="107"/>
        <end position="127"/>
    </location>
</feature>
<feature type="transmembrane region" description="Helical" evidence="2">
    <location>
        <begin position="128"/>
        <end position="148"/>
    </location>
</feature>
<feature type="transmembrane region" description="Helical" evidence="2">
    <location>
        <begin position="181"/>
        <end position="201"/>
    </location>
</feature>
<feature type="transmembrane region" description="Helical" evidence="2">
    <location>
        <begin position="231"/>
        <end position="251"/>
    </location>
</feature>
<feature type="transmembrane region" description="Helical" evidence="2">
    <location>
        <begin position="257"/>
        <end position="277"/>
    </location>
</feature>
<feature type="transmembrane region" description="Helical" evidence="2">
    <location>
        <begin position="306"/>
        <end position="326"/>
    </location>
</feature>
<name>MGLC_HAEIN</name>